<keyword id="KW-0274">FAD</keyword>
<keyword id="KW-0285">Flavoprotein</keyword>
<keyword id="KW-0325">Glycoprotein</keyword>
<keyword id="KW-0503">Monooxygenase</keyword>
<keyword id="KW-0521">NADP</keyword>
<keyword id="KW-0560">Oxidoreductase</keyword>
<keyword id="KW-1185">Reference proteome</keyword>
<keyword id="KW-0964">Secreted</keyword>
<keyword id="KW-0732">Signal</keyword>
<gene>
    <name evidence="10" type="primary">aurF</name>
    <name evidence="9" type="synonym">GIP8</name>
    <name type="ORF">FG02327</name>
    <name type="ORF">FGRAMPH1_01T05599</name>
</gene>
<name>AURF_GIBZE</name>
<dbReference type="EC" id="1.-.-.-" evidence="11"/>
<dbReference type="EMBL" id="HG970332">
    <property type="protein sequence ID" value="CEF74604.1"/>
    <property type="molecule type" value="Genomic_DNA"/>
</dbReference>
<dbReference type="RefSeq" id="XP_011318236.1">
    <property type="nucleotide sequence ID" value="XM_011319934.1"/>
</dbReference>
<dbReference type="SMR" id="I1RF61"/>
<dbReference type="STRING" id="229533.I1RF61"/>
<dbReference type="GlyCosmos" id="I1RF61">
    <property type="glycosylation" value="1 site, No reported glycans"/>
</dbReference>
<dbReference type="KEGG" id="fgr:FGSG_02327"/>
<dbReference type="VEuPathDB" id="FungiDB:FGRAMPH1_01G05599"/>
<dbReference type="eggNOG" id="KOG1399">
    <property type="taxonomic scope" value="Eukaryota"/>
</dbReference>
<dbReference type="HOGENOM" id="CLU_006909_8_1_1"/>
<dbReference type="InParanoid" id="I1RF61"/>
<dbReference type="OrthoDB" id="1282at110618"/>
<dbReference type="BioCyc" id="MetaCyc:MONOMER-19451"/>
<dbReference type="Proteomes" id="UP000070720">
    <property type="component" value="Chromosome 1"/>
</dbReference>
<dbReference type="GO" id="GO:0005576">
    <property type="term" value="C:extracellular region"/>
    <property type="evidence" value="ECO:0007669"/>
    <property type="project" value="UniProtKB-SubCell"/>
</dbReference>
<dbReference type="GO" id="GO:0050660">
    <property type="term" value="F:flavin adenine dinucleotide binding"/>
    <property type="evidence" value="ECO:0007669"/>
    <property type="project" value="InterPro"/>
</dbReference>
<dbReference type="GO" id="GO:0004499">
    <property type="term" value="F:N,N-dimethylaniline monooxygenase activity"/>
    <property type="evidence" value="ECO:0007669"/>
    <property type="project" value="InterPro"/>
</dbReference>
<dbReference type="GO" id="GO:0050661">
    <property type="term" value="F:NADP binding"/>
    <property type="evidence" value="ECO:0007669"/>
    <property type="project" value="InterPro"/>
</dbReference>
<dbReference type="Gene3D" id="3.50.50.60">
    <property type="entry name" value="FAD/NAD(P)-binding domain"/>
    <property type="match status" value="1"/>
</dbReference>
<dbReference type="InterPro" id="IPR036188">
    <property type="entry name" value="FAD/NAD-bd_sf"/>
</dbReference>
<dbReference type="InterPro" id="IPR000960">
    <property type="entry name" value="Flavin_mOase"/>
</dbReference>
<dbReference type="InterPro" id="IPR020946">
    <property type="entry name" value="Flavin_mOase-like"/>
</dbReference>
<dbReference type="InterPro" id="IPR050346">
    <property type="entry name" value="FMO-like"/>
</dbReference>
<dbReference type="PANTHER" id="PTHR23023">
    <property type="entry name" value="DIMETHYLANILINE MONOOXYGENASE"/>
    <property type="match status" value="1"/>
</dbReference>
<dbReference type="Pfam" id="PF00743">
    <property type="entry name" value="FMO-like"/>
    <property type="match status" value="1"/>
</dbReference>
<dbReference type="PIRSF" id="PIRSF000332">
    <property type="entry name" value="FMO"/>
    <property type="match status" value="1"/>
</dbReference>
<dbReference type="PRINTS" id="PR00370">
    <property type="entry name" value="FMOXYGENASE"/>
</dbReference>
<dbReference type="SUPFAM" id="SSF51905">
    <property type="entry name" value="FAD/NAD(P)-binding domain"/>
    <property type="match status" value="2"/>
</dbReference>
<protein>
    <recommendedName>
        <fullName evidence="10">Monooxygenase aurF</fullName>
        <ecNumber evidence="11">1.-.-.-</ecNumber>
    </recommendedName>
    <alternativeName>
        <fullName evidence="10">Aurofusarin biosynthesis cluster protein F</fullName>
    </alternativeName>
    <alternativeName>
        <fullName evidence="9">Gibberella pigment protein 8</fullName>
    </alternativeName>
</protein>
<sequence>MPNPTVAIVGLGALGLVTLKNLREEGFDAVGLDRNDYVGGLWHFEEGNKLTVMRSTLSNGSKQRGCFTDFPFPEDSPDFIPAEGIDRYLKDYAKHFGLLEHCRLRTSFHGARYDEKKQQWRLSLSTPDAPEPHFEWFDKVVFAMGADQIPSRPKIEGIEKFKGHVEHSMSFKNPETLAGKRVMVLGFGNTAADMATELAPIADQVYLAHRHGAIIVPRWVKGKPVDHVRTYRKYVILNLMNRYTPGLWEKTMNSVIGKLVHNTFDLKPEWRFDPAPSITNQRPLVNDELIPSLEKGSIISTHGLARVIDENTVETSDGQRYEVDAILFCTGFTVDYSVVGMDADPCRATTTDWQKSRGFTGRPLPRLYQNIFSLDHPETLAFIGHLSFMNPAFFMFDLASMAVAQLWKDPSGFPSKAEMNKQVDDQHAWVIDLAKKGPVTPSIVKASEWMEWVDRVIGSGLPEHLGYTMKGWNFWMRDRKFCNIMMDGLLSPHAYRVFPGKRKAWPGARDAIIAMNADREARFGPMD</sequence>
<reference key="1">
    <citation type="journal article" date="2007" name="Science">
        <title>The Fusarium graminearum genome reveals a link between localized polymorphism and pathogen specialization.</title>
        <authorList>
            <person name="Cuomo C.A."/>
            <person name="Gueldener U."/>
            <person name="Xu J.-R."/>
            <person name="Trail F."/>
            <person name="Turgeon B.G."/>
            <person name="Di Pietro A."/>
            <person name="Walton J.D."/>
            <person name="Ma L.-J."/>
            <person name="Baker S.E."/>
            <person name="Rep M."/>
            <person name="Adam G."/>
            <person name="Antoniw J."/>
            <person name="Baldwin T."/>
            <person name="Calvo S.E."/>
            <person name="Chang Y.-L."/>
            <person name="DeCaprio D."/>
            <person name="Gale L.R."/>
            <person name="Gnerre S."/>
            <person name="Goswami R.S."/>
            <person name="Hammond-Kosack K."/>
            <person name="Harris L.J."/>
            <person name="Hilburn K."/>
            <person name="Kennell J.C."/>
            <person name="Kroken S."/>
            <person name="Magnuson J.K."/>
            <person name="Mannhaupt G."/>
            <person name="Mauceli E.W."/>
            <person name="Mewes H.-W."/>
            <person name="Mitterbauer R."/>
            <person name="Muehlbauer G."/>
            <person name="Muensterkoetter M."/>
            <person name="Nelson D."/>
            <person name="O'Donnell K."/>
            <person name="Ouellet T."/>
            <person name="Qi W."/>
            <person name="Quesneville H."/>
            <person name="Roncero M.I.G."/>
            <person name="Seong K.-Y."/>
            <person name="Tetko I.V."/>
            <person name="Urban M."/>
            <person name="Waalwijk C."/>
            <person name="Ward T.J."/>
            <person name="Yao J."/>
            <person name="Birren B.W."/>
            <person name="Kistler H.C."/>
        </authorList>
    </citation>
    <scope>NUCLEOTIDE SEQUENCE [LARGE SCALE GENOMIC DNA]</scope>
    <source>
        <strain>ATCC MYA-4620 / CBS 123657 / FGSC 9075 / NRRL 31084 / PH-1</strain>
    </source>
</reference>
<reference key="2">
    <citation type="journal article" date="2010" name="Nature">
        <title>Comparative genomics reveals mobile pathogenicity chromosomes in Fusarium.</title>
        <authorList>
            <person name="Ma L.-J."/>
            <person name="van der Does H.C."/>
            <person name="Borkovich K.A."/>
            <person name="Coleman J.J."/>
            <person name="Daboussi M.-J."/>
            <person name="Di Pietro A."/>
            <person name="Dufresne M."/>
            <person name="Freitag M."/>
            <person name="Grabherr M."/>
            <person name="Henrissat B."/>
            <person name="Houterman P.M."/>
            <person name="Kang S."/>
            <person name="Shim W.-B."/>
            <person name="Woloshuk C."/>
            <person name="Xie X."/>
            <person name="Xu J.-R."/>
            <person name="Antoniw J."/>
            <person name="Baker S.E."/>
            <person name="Bluhm B.H."/>
            <person name="Breakspear A."/>
            <person name="Brown D.W."/>
            <person name="Butchko R.A.E."/>
            <person name="Chapman S."/>
            <person name="Coulson R."/>
            <person name="Coutinho P.M."/>
            <person name="Danchin E.G.J."/>
            <person name="Diener A."/>
            <person name="Gale L.R."/>
            <person name="Gardiner D.M."/>
            <person name="Goff S."/>
            <person name="Hammond-Kosack K.E."/>
            <person name="Hilburn K."/>
            <person name="Hua-Van A."/>
            <person name="Jonkers W."/>
            <person name="Kazan K."/>
            <person name="Kodira C.D."/>
            <person name="Koehrsen M."/>
            <person name="Kumar L."/>
            <person name="Lee Y.-H."/>
            <person name="Li L."/>
            <person name="Manners J.M."/>
            <person name="Miranda-Saavedra D."/>
            <person name="Mukherjee M."/>
            <person name="Park G."/>
            <person name="Park J."/>
            <person name="Park S.-Y."/>
            <person name="Proctor R.H."/>
            <person name="Regev A."/>
            <person name="Ruiz-Roldan M.C."/>
            <person name="Sain D."/>
            <person name="Sakthikumar S."/>
            <person name="Sykes S."/>
            <person name="Schwartz D.C."/>
            <person name="Turgeon B.G."/>
            <person name="Wapinski I."/>
            <person name="Yoder O."/>
            <person name="Young S."/>
            <person name="Zeng Q."/>
            <person name="Zhou S."/>
            <person name="Galagan J."/>
            <person name="Cuomo C.A."/>
            <person name="Kistler H.C."/>
            <person name="Rep M."/>
        </authorList>
    </citation>
    <scope>GENOME REANNOTATION</scope>
    <source>
        <strain>ATCC MYA-4620 / CBS 123657 / FGSC 9075 / NRRL 31084 / PH-1</strain>
    </source>
</reference>
<reference key="3">
    <citation type="journal article" date="2015" name="BMC Genomics">
        <title>The completed genome sequence of the pathogenic ascomycete fungus Fusarium graminearum.</title>
        <authorList>
            <person name="King R."/>
            <person name="Urban M."/>
            <person name="Hammond-Kosack M.C.U."/>
            <person name="Hassani-Pak K."/>
            <person name="Hammond-Kosack K.E."/>
        </authorList>
    </citation>
    <scope>NUCLEOTIDE SEQUENCE [LARGE SCALE GENOMIC DNA]</scope>
    <source>
        <strain>ATCC MYA-4620 / CBS 123657 / FGSC 9075 / NRRL 31084 / PH-1</strain>
    </source>
</reference>
<reference key="4">
    <citation type="journal article" date="2005" name="Appl. Environ. Microbiol.">
        <title>Putative polyketide synthase and laccase genes for biosynthesis of aurofusarin in Gibberella zeae.</title>
        <authorList>
            <person name="Kim J.E."/>
            <person name="Han K.H."/>
            <person name="Jin J."/>
            <person name="Kim H."/>
            <person name="Kim J.C."/>
            <person name="Yun S.H."/>
            <person name="Lee Y.W."/>
        </authorList>
    </citation>
    <scope>FUNCTION</scope>
</reference>
<reference key="5">
    <citation type="journal article" date="2005" name="Fungal Genet. Biol.">
        <title>Identification of a gene cluster responsible for the biosynthesis of aurofusarin in the Fusarium graminearum species complex.</title>
        <authorList>
            <person name="Malz S."/>
            <person name="Grell M.N."/>
            <person name="Thrane C."/>
            <person name="Maier F.J."/>
            <person name="Rosager P."/>
            <person name="Felk A."/>
            <person name="Albertsen K.S."/>
            <person name="Salomon S."/>
            <person name="Bohn L."/>
            <person name="Schaefer W."/>
            <person name="Giese H."/>
        </authorList>
    </citation>
    <scope>FUNCTION</scope>
    <scope>PATHWAY</scope>
</reference>
<reference key="6">
    <citation type="journal article" date="2006" name="Mol. Microbiol.">
        <title>The biosynthetic pathway for aurofusarin in Fusarium graminearum reveals a close link between the naphthoquinones and naphthopyrones.</title>
        <authorList>
            <person name="Frandsen R.J."/>
            <person name="Nielsen N.J."/>
            <person name="Maolanon N."/>
            <person name="Soerensen J.C."/>
            <person name="Olsson S."/>
            <person name="Nielsen J."/>
            <person name="Giese H."/>
        </authorList>
    </citation>
    <scope>FUNCTION</scope>
    <scope>DISRUPTION PHENOTYPE</scope>
    <scope>INDUCTION</scope>
    <scope>PATHWAY</scope>
</reference>
<reference key="7">
    <citation type="journal article" date="2006" name="Appl. Environ. Microbiol.">
        <title>GIP2, a putative transcription factor that regulates the aurofusarin biosynthetic gene cluster in Gibberella zeae.</title>
        <authorList>
            <person name="Kim J.E."/>
            <person name="Jin J."/>
            <person name="Kim H."/>
            <person name="Kim J.C."/>
            <person name="Yun S.H."/>
            <person name="Lee Y.W."/>
        </authorList>
    </citation>
    <scope>INDUCTION</scope>
</reference>
<reference key="8">
    <citation type="journal article" date="2011" name="J. Biol. Chem.">
        <title>Two novel classes of enzymes are required for the biosynthesis of aurofusarin in Fusarium graminearum.</title>
        <authorList>
            <person name="Frandsen R.J."/>
            <person name="Schuett C."/>
            <person name="Lund B.W."/>
            <person name="Staerk D."/>
            <person name="Nielsen J."/>
            <person name="Olsson S."/>
            <person name="Giese H."/>
        </authorList>
    </citation>
    <scope>FUNCTION</scope>
    <scope>SUBCELLULAR LOCATION</scope>
    <scope>SUBUNIT</scope>
    <scope>PATHWAY</scope>
</reference>
<reference key="9">
    <citation type="journal article" date="2013" name="Microb. Cell Fact.">
        <title>Reconstruction of the biosynthetic pathway for the core fungal polyketide scaffold rubrofusarin in Saccharomyces cerevisiae.</title>
        <authorList>
            <person name="Rugbjerg P."/>
            <person name="Naesby M."/>
            <person name="Mortensen U.H."/>
            <person name="Frandsen R.J."/>
        </authorList>
    </citation>
    <scope>FUNCTION</scope>
</reference>
<proteinExistence type="evidence at protein level"/>
<evidence type="ECO:0000255" key="1"/>
<evidence type="ECO:0000255" key="2">
    <source>
        <dbReference type="PROSITE-ProRule" id="PRU00498"/>
    </source>
</evidence>
<evidence type="ECO:0000269" key="3">
    <source>
    </source>
</evidence>
<evidence type="ECO:0000269" key="4">
    <source>
    </source>
</evidence>
<evidence type="ECO:0000269" key="5">
    <source>
    </source>
</evidence>
<evidence type="ECO:0000269" key="6">
    <source>
    </source>
</evidence>
<evidence type="ECO:0000269" key="7">
    <source>
    </source>
</evidence>
<evidence type="ECO:0000269" key="8">
    <source>
    </source>
</evidence>
<evidence type="ECO:0000303" key="9">
    <source>
    </source>
</evidence>
<evidence type="ECO:0000303" key="10">
    <source>
    </source>
</evidence>
<evidence type="ECO:0000305" key="11"/>
<evidence type="ECO:0000305" key="12">
    <source>
    </source>
</evidence>
<organism>
    <name type="scientific">Gibberella zeae (strain ATCC MYA-4620 / CBS 123657 / FGSC 9075 / NRRL 31084 / PH-1)</name>
    <name type="common">Wheat head blight fungus</name>
    <name type="synonym">Fusarium graminearum</name>
    <dbReference type="NCBI Taxonomy" id="229533"/>
    <lineage>
        <taxon>Eukaryota</taxon>
        <taxon>Fungi</taxon>
        <taxon>Dikarya</taxon>
        <taxon>Ascomycota</taxon>
        <taxon>Pezizomycotina</taxon>
        <taxon>Sordariomycetes</taxon>
        <taxon>Hypocreomycetidae</taxon>
        <taxon>Hypocreales</taxon>
        <taxon>Nectriaceae</taxon>
        <taxon>Fusarium</taxon>
    </lineage>
</organism>
<feature type="signal peptide" evidence="1">
    <location>
        <begin position="1"/>
        <end position="19"/>
    </location>
</feature>
<feature type="chain" id="PRO_0000441092" description="Monooxygenase aurF" evidence="1">
    <location>
        <begin position="20"/>
        <end position="527"/>
    </location>
</feature>
<feature type="glycosylation site" description="N-linked (GlcNAc...) asparagine" evidence="2">
    <location>
        <position position="59"/>
    </location>
</feature>
<accession>I1RF61</accession>
<comment type="function">
    <text evidence="3 4 6 7 8">Monooxygenase; part of the gene cluster that mediates the biosynthesis of aurofusarin, a red mycelium pigment which is acting as a mycotoxin (PubMed:15809006, PubMed:15811992, PubMed:16879655). The first step is performed by the polyketide synthase which condenses one acetyl-CoA and 6 malonyl-CoA units to form the first intermediate, the cyclic heptaketide and yellow pigment YWA1 (PubMed:21296881, PubMed:23557488). The C2 hydroxyl group in the pyrone ring of YWA1 is probably formed during ring closure by an aldol-type cyclization reaction (PubMed:21296881). The dehydratase aurZ then acts as the first tailoring enzyme in the aurofusarin biosynthetic pathway by converting YWA1 to nor-rubrofusarin (PubMed:21296881, PubMed:23557488). Nor-rubrofusarin is then methylated to rubrofusarin by the O-methyltransferase aurJ (PubMed:21296881, PubMed:23557488). Rubrofusarin is then transported across the plasma membrane by the rubrofusarin-specific pump aurT for further enzymatic processing by the extracellular complex composed of GIP1, aurF, aurO and aurS to yield aurofusarin (PubMed:21296881).</text>
</comment>
<comment type="cofactor">
    <cofactor evidence="11">
        <name>FAD</name>
        <dbReference type="ChEBI" id="CHEBI:57692"/>
    </cofactor>
</comment>
<comment type="pathway">
    <text evidence="3 6 7">Pigment biosynthesis.</text>
</comment>
<comment type="subunit">
    <text evidence="12">Might be part of an extracellular enzyme complex composed of GIP1, aurF, aurO and aurS (PubMed:21296881).</text>
</comment>
<comment type="subcellular location">
    <subcellularLocation>
        <location evidence="12">Secreted</location>
    </subcellularLocation>
    <subcellularLocation>
        <location evidence="12">Secreted</location>
        <location evidence="12">Extracellular space</location>
    </subcellularLocation>
</comment>
<comment type="induction">
    <text evidence="5 6">Expression is regulated by the aurofusarin biosynthesis cluster-specific transcription factor aurR1/GIP2 (PubMed:16461721, PubMed:16879655).</text>
</comment>
<comment type="disruption phenotype">
    <text evidence="6">Impairs autofusarin biosynthesis and leads to a yellow pigmentation via accumulation of the intermediate rubrofusarin (PubMed:16879655).</text>
</comment>
<comment type="similarity">
    <text evidence="11">Belongs to the FMO family.</text>
</comment>